<feature type="peptide" id="PRO_0000311601" description="Brevinin-2DYc">
    <location>
        <begin position="1"/>
        <end position="33"/>
    </location>
</feature>
<feature type="disulfide bond" evidence="1">
    <location>
        <begin position="27"/>
        <end position="33"/>
    </location>
</feature>
<comment type="function">
    <text evidence="2">Antimicrobial peptide. A mixture of Brevinin-2DYc/2DYd is active against the Gram-positive bacterium S.aureus (MIC=15 uM) and the Gram-negative bacterium E.coli (MIC=15 uM).</text>
</comment>
<comment type="subcellular location">
    <subcellularLocation>
        <location>Secreted</location>
    </subcellularLocation>
</comment>
<comment type="tissue specificity">
    <text>Expressed by the skin glands.</text>
</comment>
<comment type="mass spectrometry" mass="3314.0" method="MALDI" evidence="2"/>
<comment type="similarity">
    <text evidence="3">Belongs to the frog skin active peptide (FSAP) family. Brevinin subfamily.</text>
</comment>
<dbReference type="SMR" id="P0C5X3"/>
<dbReference type="GO" id="GO:0005576">
    <property type="term" value="C:extracellular region"/>
    <property type="evidence" value="ECO:0007669"/>
    <property type="project" value="UniProtKB-SubCell"/>
</dbReference>
<dbReference type="GO" id="GO:0042742">
    <property type="term" value="P:defense response to bacterium"/>
    <property type="evidence" value="ECO:0007669"/>
    <property type="project" value="UniProtKB-KW"/>
</dbReference>
<dbReference type="InterPro" id="IPR012521">
    <property type="entry name" value="Antimicrobial_frog_2"/>
</dbReference>
<dbReference type="Pfam" id="PF08023">
    <property type="entry name" value="Antimicrobial_2"/>
    <property type="match status" value="1"/>
</dbReference>
<evidence type="ECO:0000250" key="1"/>
<evidence type="ECO:0000269" key="2">
    <source>
    </source>
</evidence>
<evidence type="ECO:0000305" key="3"/>
<sequence length="33" mass="3318">GLFDVVKGVLKGVGKNVAGSLLEQLKCKLSGGC</sequence>
<protein>
    <recommendedName>
        <fullName>Brevinin-2DYc</fullName>
    </recommendedName>
</protein>
<name>BR2C_RANDY</name>
<reference key="1">
    <citation type="journal article" date="2007" name="Toxicon">
        <title>Cytolytic peptides belonging to the brevinin-1 and brevinin-2 families isolated from the skin of the Japanese brown frog, Rana dybowskii.</title>
        <authorList>
            <person name="Conlon J.M."/>
            <person name="Kolodziejek J."/>
            <person name="Nowotny N."/>
            <person name="Leprince J."/>
            <person name="Vaudry H."/>
            <person name="Coquet L."/>
            <person name="Jouenne T."/>
            <person name="Iwamuro S."/>
        </authorList>
    </citation>
    <scope>PROTEIN SEQUENCE</scope>
    <scope>FUNCTION</scope>
    <scope>MASS SPECTROMETRY</scope>
    <source>
        <tissue>Skin secretion</tissue>
    </source>
</reference>
<organism>
    <name type="scientific">Rana dybowskii</name>
    <name type="common">Dybovsky's frog</name>
    <name type="synonym">Korean brown frog</name>
    <dbReference type="NCBI Taxonomy" id="71582"/>
    <lineage>
        <taxon>Eukaryota</taxon>
        <taxon>Metazoa</taxon>
        <taxon>Chordata</taxon>
        <taxon>Craniata</taxon>
        <taxon>Vertebrata</taxon>
        <taxon>Euteleostomi</taxon>
        <taxon>Amphibia</taxon>
        <taxon>Batrachia</taxon>
        <taxon>Anura</taxon>
        <taxon>Neobatrachia</taxon>
        <taxon>Ranoidea</taxon>
        <taxon>Ranidae</taxon>
        <taxon>Rana</taxon>
        <taxon>Rana</taxon>
    </lineage>
</organism>
<keyword id="KW-0878">Amphibian defense peptide</keyword>
<keyword id="KW-0044">Antibiotic</keyword>
<keyword id="KW-0929">Antimicrobial</keyword>
<keyword id="KW-0903">Direct protein sequencing</keyword>
<keyword id="KW-1015">Disulfide bond</keyword>
<keyword id="KW-0964">Secreted</keyword>
<proteinExistence type="evidence at protein level"/>
<accession>P0C5X3</accession>